<proteinExistence type="evidence at transcript level"/>
<reference key="1">
    <citation type="journal article" date="2005" name="Genome Biol.">
        <title>Full-length cDNAs from chicken bursal lymphocytes to facilitate gene function analysis.</title>
        <authorList>
            <person name="Caldwell R.B."/>
            <person name="Kierzek A.M."/>
            <person name="Arakawa H."/>
            <person name="Bezzubov Y."/>
            <person name="Zaim J."/>
            <person name="Fiedler P."/>
            <person name="Kutter S."/>
            <person name="Blagodatski A."/>
            <person name="Kostovska D."/>
            <person name="Koter M."/>
            <person name="Plachy J."/>
            <person name="Carninci P."/>
            <person name="Hayashizaki Y."/>
            <person name="Buerstedde J.-M."/>
        </authorList>
    </citation>
    <scope>NUCLEOTIDE SEQUENCE [LARGE SCALE MRNA]</scope>
    <source>
        <strain>CB</strain>
        <tissue>Bursa of Fabricius</tissue>
    </source>
</reference>
<accession>Q5F352</accession>
<gene>
    <name type="primary">NRAS</name>
    <name type="ORF">RCJMB04_34f10</name>
</gene>
<comment type="function">
    <text evidence="2">Ras proteins bind GDP/GTP and possess intrinsic GTPase activity.</text>
</comment>
<comment type="catalytic activity">
    <reaction evidence="3">
        <text>GTP + H2O = GDP + phosphate + H(+)</text>
        <dbReference type="Rhea" id="RHEA:19669"/>
        <dbReference type="ChEBI" id="CHEBI:15377"/>
        <dbReference type="ChEBI" id="CHEBI:15378"/>
        <dbReference type="ChEBI" id="CHEBI:37565"/>
        <dbReference type="ChEBI" id="CHEBI:43474"/>
        <dbReference type="ChEBI" id="CHEBI:58189"/>
        <dbReference type="EC" id="3.6.5.2"/>
    </reaction>
</comment>
<comment type="activity regulation">
    <text>Alternates between an inactive form bound to GDP and an active form bound to GTP. Activated by a guanine nucleotide-exchange factor (GEF) and inactivated by a GTPase-activating protein (GAP).</text>
</comment>
<comment type="subcellular location">
    <subcellularLocation>
        <location evidence="2">Cell membrane</location>
        <topology evidence="2">Lipid-anchor</topology>
        <orientation evidence="2">Cytoplasmic side</orientation>
    </subcellularLocation>
    <subcellularLocation>
        <location evidence="2">Golgi apparatus membrane</location>
        <topology evidence="2">Lipid-anchor</topology>
    </subcellularLocation>
    <text evidence="2">Shuttles between the plasma membrane and the Golgi apparatus.</text>
</comment>
<comment type="PTM">
    <text evidence="2">Palmitoylated by the ZDHHC9-GOLGA7 complex. Depalmitoylated by ABHD17A, ABHD17B and ABHD17C. A continuous cycle of de- and re-palmitoylation regulates rapid exchange between plasma membrane and Golgi.</text>
</comment>
<comment type="similarity">
    <text evidence="5">Belongs to the small GTPase superfamily. Ras family.</text>
</comment>
<name>RASN_CHICK</name>
<evidence type="ECO:0000250" key="1"/>
<evidence type="ECO:0000250" key="2">
    <source>
        <dbReference type="UniProtKB" id="P01111"/>
    </source>
</evidence>
<evidence type="ECO:0000250" key="3">
    <source>
        <dbReference type="UniProtKB" id="P01116"/>
    </source>
</evidence>
<evidence type="ECO:0000255" key="4"/>
<evidence type="ECO:0000305" key="5"/>
<organism>
    <name type="scientific">Gallus gallus</name>
    <name type="common">Chicken</name>
    <dbReference type="NCBI Taxonomy" id="9031"/>
    <lineage>
        <taxon>Eukaryota</taxon>
        <taxon>Metazoa</taxon>
        <taxon>Chordata</taxon>
        <taxon>Craniata</taxon>
        <taxon>Vertebrata</taxon>
        <taxon>Euteleostomi</taxon>
        <taxon>Archelosauria</taxon>
        <taxon>Archosauria</taxon>
        <taxon>Dinosauria</taxon>
        <taxon>Saurischia</taxon>
        <taxon>Theropoda</taxon>
        <taxon>Coelurosauria</taxon>
        <taxon>Aves</taxon>
        <taxon>Neognathae</taxon>
        <taxon>Galloanserae</taxon>
        <taxon>Galliformes</taxon>
        <taxon>Phasianidae</taxon>
        <taxon>Phasianinae</taxon>
        <taxon>Gallus</taxon>
    </lineage>
</organism>
<sequence length="189" mass="21278">MTEYKLVVVGAGGVGKSALTIQLIQNHFVDEYDPTIEDSYRKQVVIDGETCLLDILDTAGQEEYSAMRDQYMRTGEGFLCVFAINNSKSFADINLYREQIKRVKDSDDVPMVLVGNKCDLPTRTVDTKQAQELAKSYGIPFIETSAKTRQGVEDAFYTLVREIRQYRMKKLNSNEDGNQGCMGLSCIVM</sequence>
<keyword id="KW-1003">Cell membrane</keyword>
<keyword id="KW-0333">Golgi apparatus</keyword>
<keyword id="KW-0342">GTP-binding</keyword>
<keyword id="KW-0378">Hydrolase</keyword>
<keyword id="KW-0449">Lipoprotein</keyword>
<keyword id="KW-0472">Membrane</keyword>
<keyword id="KW-0488">Methylation</keyword>
<keyword id="KW-0547">Nucleotide-binding</keyword>
<keyword id="KW-0564">Palmitate</keyword>
<keyword id="KW-0636">Prenylation</keyword>
<keyword id="KW-1185">Reference proteome</keyword>
<feature type="chain" id="PRO_0000043016" description="GTPase NRas">
    <location>
        <begin position="1"/>
        <end position="186"/>
    </location>
</feature>
<feature type="propeptide" id="PRO_0000043017" description="Removed in mature form" evidence="1">
    <location>
        <begin position="187"/>
        <end position="189"/>
    </location>
</feature>
<feature type="region of interest" description="Hypervariable region" evidence="1">
    <location>
        <begin position="166"/>
        <end position="185"/>
    </location>
</feature>
<feature type="short sequence motif" description="Effector region">
    <location>
        <begin position="32"/>
        <end position="40"/>
    </location>
</feature>
<feature type="binding site" evidence="2">
    <location>
        <begin position="10"/>
        <end position="17"/>
    </location>
    <ligand>
        <name>GTP</name>
        <dbReference type="ChEBI" id="CHEBI:37565"/>
    </ligand>
</feature>
<feature type="binding site" evidence="4">
    <location>
        <begin position="57"/>
        <end position="61"/>
    </location>
    <ligand>
        <name>GTP</name>
        <dbReference type="ChEBI" id="CHEBI:37565"/>
    </ligand>
</feature>
<feature type="binding site" evidence="2">
    <location>
        <begin position="116"/>
        <end position="119"/>
    </location>
    <ligand>
        <name>GTP</name>
        <dbReference type="ChEBI" id="CHEBI:37565"/>
    </ligand>
</feature>
<feature type="lipid moiety-binding region" description="S-palmitoyl cysteine" evidence="2">
    <location>
        <position position="181"/>
    </location>
</feature>
<feature type="lipid moiety-binding region" description="S-farnesyl cysteine" evidence="2">
    <location>
        <position position="186"/>
    </location>
</feature>
<protein>
    <recommendedName>
        <fullName>GTPase NRas</fullName>
        <ecNumber evidence="3">3.6.5.2</ecNumber>
    </recommendedName>
    <alternativeName>
        <fullName>Transforming protein N-Ras</fullName>
    </alternativeName>
</protein>
<dbReference type="EC" id="3.6.5.2" evidence="3"/>
<dbReference type="EMBL" id="AJ851798">
    <property type="protein sequence ID" value="CAH65432.1"/>
    <property type="molecule type" value="mRNA"/>
</dbReference>
<dbReference type="RefSeq" id="NP_001012567.1">
    <property type="nucleotide sequence ID" value="NM_001012549.2"/>
</dbReference>
<dbReference type="SMR" id="Q5F352"/>
<dbReference type="FunCoup" id="Q5F352">
    <property type="interactions" value="1857"/>
</dbReference>
<dbReference type="STRING" id="9031.ENSGALP00000043468"/>
<dbReference type="PaxDb" id="9031-ENSGALP00000043468"/>
<dbReference type="Ensembl" id="ENSGALT00010062261.1">
    <property type="protein sequence ID" value="ENSGALP00010038487.1"/>
    <property type="gene ID" value="ENSGALG00010025512.1"/>
</dbReference>
<dbReference type="GeneID" id="419885"/>
<dbReference type="KEGG" id="gga:419885"/>
<dbReference type="CTD" id="4893"/>
<dbReference type="VEuPathDB" id="HostDB:geneid_419885"/>
<dbReference type="eggNOG" id="KOG0395">
    <property type="taxonomic scope" value="Eukaryota"/>
</dbReference>
<dbReference type="GeneTree" id="ENSGT00940000158947"/>
<dbReference type="HOGENOM" id="CLU_041217_9_8_1"/>
<dbReference type="InParanoid" id="Q5F352"/>
<dbReference type="OMA" id="RAVDIWG"/>
<dbReference type="OrthoDB" id="5976022at2759"/>
<dbReference type="PhylomeDB" id="Q5F352"/>
<dbReference type="Reactome" id="R-GGA-1169092">
    <property type="pathway name" value="Activation of RAS in B cells"/>
</dbReference>
<dbReference type="Reactome" id="R-GGA-1250347">
    <property type="pathway name" value="SHC1 events in ERBB4 signaling"/>
</dbReference>
<dbReference type="Reactome" id="R-GGA-1433557">
    <property type="pathway name" value="Signaling by SCF-KIT"/>
</dbReference>
<dbReference type="Reactome" id="R-GGA-171007">
    <property type="pathway name" value="p38MAPK events"/>
</dbReference>
<dbReference type="Reactome" id="R-GGA-179812">
    <property type="pathway name" value="GRB2 events in EGFR signaling"/>
</dbReference>
<dbReference type="Reactome" id="R-GGA-180336">
    <property type="pathway name" value="SHC1 events in EGFR signaling"/>
</dbReference>
<dbReference type="Reactome" id="R-GGA-186763">
    <property type="pathway name" value="Downstream signal transduction"/>
</dbReference>
<dbReference type="Reactome" id="R-GGA-1963640">
    <property type="pathway name" value="GRB2 events in ERBB2 signaling"/>
</dbReference>
<dbReference type="Reactome" id="R-GGA-210993">
    <property type="pathway name" value="Tie2 Signaling"/>
</dbReference>
<dbReference type="Reactome" id="R-GGA-2179392">
    <property type="pathway name" value="EGFR Transactivation by Gastrin"/>
</dbReference>
<dbReference type="Reactome" id="R-GGA-2424491">
    <property type="pathway name" value="DAP12 signaling"/>
</dbReference>
<dbReference type="Reactome" id="R-GGA-2871796">
    <property type="pathway name" value="FCERI mediated MAPK activation"/>
</dbReference>
<dbReference type="Reactome" id="R-GGA-375165">
    <property type="pathway name" value="NCAM signaling for neurite out-growth"/>
</dbReference>
<dbReference type="Reactome" id="R-GGA-5218921">
    <property type="pathway name" value="VEGFR2 mediated cell proliferation"/>
</dbReference>
<dbReference type="Reactome" id="R-GGA-5621575">
    <property type="pathway name" value="CD209 (DC-SIGN) signaling"/>
</dbReference>
<dbReference type="Reactome" id="R-GGA-5654688">
    <property type="pathway name" value="SHC-mediated cascade:FGFR1"/>
</dbReference>
<dbReference type="Reactome" id="R-GGA-5654693">
    <property type="pathway name" value="FRS-mediated FGFR1 signaling"/>
</dbReference>
<dbReference type="Reactome" id="R-GGA-5654699">
    <property type="pathway name" value="SHC-mediated cascade:FGFR2"/>
</dbReference>
<dbReference type="Reactome" id="R-GGA-5654700">
    <property type="pathway name" value="FRS-mediated FGFR2 signaling"/>
</dbReference>
<dbReference type="Reactome" id="R-GGA-5654704">
    <property type="pathway name" value="SHC-mediated cascade:FGFR3"/>
</dbReference>
<dbReference type="Reactome" id="R-GGA-5654706">
    <property type="pathway name" value="FRS-mediated FGFR3 signaling"/>
</dbReference>
<dbReference type="Reactome" id="R-GGA-5654712">
    <property type="pathway name" value="FRS-mediated FGFR4 signaling"/>
</dbReference>
<dbReference type="Reactome" id="R-GGA-5654719">
    <property type="pathway name" value="SHC-mediated cascade:FGFR4"/>
</dbReference>
<dbReference type="Reactome" id="R-GGA-5658442">
    <property type="pathway name" value="Regulation of RAS by GAPs"/>
</dbReference>
<dbReference type="Reactome" id="R-GGA-5673000">
    <property type="pathway name" value="RAF activation"/>
</dbReference>
<dbReference type="Reactome" id="R-GGA-5673001">
    <property type="pathway name" value="RAF/MAP kinase cascade"/>
</dbReference>
<dbReference type="Reactome" id="R-GGA-5674135">
    <property type="pathway name" value="MAP2K and MAPK activation"/>
</dbReference>
<dbReference type="Reactome" id="R-GGA-5675221">
    <property type="pathway name" value="Negative regulation of MAPK pathway"/>
</dbReference>
<dbReference type="Reactome" id="R-GGA-6798695">
    <property type="pathway name" value="Neutrophil degranulation"/>
</dbReference>
<dbReference type="Reactome" id="R-GGA-8849471">
    <property type="pathway name" value="PTK6 Regulates RHO GTPases, RAS GTPase and MAP kinases"/>
</dbReference>
<dbReference type="Reactome" id="R-GGA-8851805">
    <property type="pathway name" value="MET activates RAS signaling"/>
</dbReference>
<dbReference type="Reactome" id="R-GGA-9607240">
    <property type="pathway name" value="FLT3 Signaling"/>
</dbReference>
<dbReference type="Reactome" id="R-GGA-9634635">
    <property type="pathway name" value="Estrogen-stimulated signaling through PRKCZ"/>
</dbReference>
<dbReference type="Reactome" id="R-GGA-9648002">
    <property type="pathway name" value="RAS processing"/>
</dbReference>
<dbReference type="PRO" id="PR:Q5F352"/>
<dbReference type="Proteomes" id="UP000000539">
    <property type="component" value="Chromosome 26"/>
</dbReference>
<dbReference type="Bgee" id="ENSGALG00000026692">
    <property type="expression patterns" value="Expressed in granulocyte and 14 other cell types or tissues"/>
</dbReference>
<dbReference type="GO" id="GO:0000139">
    <property type="term" value="C:Golgi membrane"/>
    <property type="evidence" value="ECO:0007669"/>
    <property type="project" value="UniProtKB-SubCell"/>
</dbReference>
<dbReference type="GO" id="GO:0005886">
    <property type="term" value="C:plasma membrane"/>
    <property type="evidence" value="ECO:0000318"/>
    <property type="project" value="GO_Central"/>
</dbReference>
<dbReference type="GO" id="GO:0003925">
    <property type="term" value="F:G protein activity"/>
    <property type="evidence" value="ECO:0007669"/>
    <property type="project" value="UniProtKB-EC"/>
</dbReference>
<dbReference type="GO" id="GO:0019003">
    <property type="term" value="F:GDP binding"/>
    <property type="evidence" value="ECO:0000318"/>
    <property type="project" value="GO_Central"/>
</dbReference>
<dbReference type="GO" id="GO:0005525">
    <property type="term" value="F:GTP binding"/>
    <property type="evidence" value="ECO:0000318"/>
    <property type="project" value="GO_Central"/>
</dbReference>
<dbReference type="GO" id="GO:0003924">
    <property type="term" value="F:GTPase activity"/>
    <property type="evidence" value="ECO:0000250"/>
    <property type="project" value="UniProtKB"/>
</dbReference>
<dbReference type="GO" id="GO:0044877">
    <property type="term" value="F:protein-containing complex binding"/>
    <property type="evidence" value="ECO:0007669"/>
    <property type="project" value="Ensembl"/>
</dbReference>
<dbReference type="GO" id="GO:0001938">
    <property type="term" value="P:positive regulation of endothelial cell proliferation"/>
    <property type="evidence" value="ECO:0007669"/>
    <property type="project" value="Ensembl"/>
</dbReference>
<dbReference type="GO" id="GO:0007265">
    <property type="term" value="P:Ras protein signal transduction"/>
    <property type="evidence" value="ECO:0000250"/>
    <property type="project" value="UniProtKB"/>
</dbReference>
<dbReference type="CDD" id="cd04138">
    <property type="entry name" value="H_N_K_Ras_like"/>
    <property type="match status" value="1"/>
</dbReference>
<dbReference type="FunFam" id="3.40.50.300:FF:000096">
    <property type="entry name" value="KRAS proto-oncogene, GTPase"/>
    <property type="match status" value="1"/>
</dbReference>
<dbReference type="Gene3D" id="3.40.50.300">
    <property type="entry name" value="P-loop containing nucleotide triphosphate hydrolases"/>
    <property type="match status" value="1"/>
</dbReference>
<dbReference type="InterPro" id="IPR027417">
    <property type="entry name" value="P-loop_NTPase"/>
</dbReference>
<dbReference type="InterPro" id="IPR005225">
    <property type="entry name" value="Small_GTP-bd"/>
</dbReference>
<dbReference type="InterPro" id="IPR001806">
    <property type="entry name" value="Small_GTPase"/>
</dbReference>
<dbReference type="InterPro" id="IPR020849">
    <property type="entry name" value="Small_GTPase_Ras-type"/>
</dbReference>
<dbReference type="NCBIfam" id="TIGR00231">
    <property type="entry name" value="small_GTP"/>
    <property type="match status" value="1"/>
</dbReference>
<dbReference type="PANTHER" id="PTHR24070">
    <property type="entry name" value="RAS, DI-RAS, AND RHEB FAMILY MEMBERS OF SMALL GTPASE SUPERFAMILY"/>
    <property type="match status" value="1"/>
</dbReference>
<dbReference type="Pfam" id="PF00071">
    <property type="entry name" value="Ras"/>
    <property type="match status" value="1"/>
</dbReference>
<dbReference type="PRINTS" id="PR00449">
    <property type="entry name" value="RASTRNSFRMNG"/>
</dbReference>
<dbReference type="SMART" id="SM00175">
    <property type="entry name" value="RAB"/>
    <property type="match status" value="1"/>
</dbReference>
<dbReference type="SMART" id="SM00173">
    <property type="entry name" value="RAS"/>
    <property type="match status" value="1"/>
</dbReference>
<dbReference type="SMART" id="SM00174">
    <property type="entry name" value="RHO"/>
    <property type="match status" value="1"/>
</dbReference>
<dbReference type="SUPFAM" id="SSF52540">
    <property type="entry name" value="P-loop containing nucleoside triphosphate hydrolases"/>
    <property type="match status" value="1"/>
</dbReference>
<dbReference type="PROSITE" id="PS51421">
    <property type="entry name" value="RAS"/>
    <property type="match status" value="1"/>
</dbReference>